<sequence>MPGVKVHPNESFDEAYRRFKKQTDRNLVVTEVRARRFFEPMTEIRKKQKISARKKMLKRLYMLRRYESRL</sequence>
<proteinExistence type="inferred from homology"/>
<evidence type="ECO:0000255" key="1">
    <source>
        <dbReference type="HAMAP-Rule" id="MF_00358"/>
    </source>
</evidence>
<evidence type="ECO:0000305" key="2"/>
<dbReference type="EMBL" id="CP000487">
    <property type="protein sequence ID" value="ABK82631.1"/>
    <property type="molecule type" value="Genomic_DNA"/>
</dbReference>
<dbReference type="RefSeq" id="WP_002848116.1">
    <property type="nucleotide sequence ID" value="NC_008599.1"/>
</dbReference>
<dbReference type="SMR" id="A0RM99"/>
<dbReference type="GeneID" id="93112533"/>
<dbReference type="KEGG" id="cff:CFF8240_0122"/>
<dbReference type="eggNOG" id="COG0828">
    <property type="taxonomic scope" value="Bacteria"/>
</dbReference>
<dbReference type="HOGENOM" id="CLU_159258_1_1_7"/>
<dbReference type="Proteomes" id="UP000000760">
    <property type="component" value="Chromosome"/>
</dbReference>
<dbReference type="GO" id="GO:1990904">
    <property type="term" value="C:ribonucleoprotein complex"/>
    <property type="evidence" value="ECO:0007669"/>
    <property type="project" value="UniProtKB-KW"/>
</dbReference>
<dbReference type="GO" id="GO:0005840">
    <property type="term" value="C:ribosome"/>
    <property type="evidence" value="ECO:0007669"/>
    <property type="project" value="UniProtKB-KW"/>
</dbReference>
<dbReference type="GO" id="GO:0003735">
    <property type="term" value="F:structural constituent of ribosome"/>
    <property type="evidence" value="ECO:0007669"/>
    <property type="project" value="InterPro"/>
</dbReference>
<dbReference type="GO" id="GO:0006412">
    <property type="term" value="P:translation"/>
    <property type="evidence" value="ECO:0007669"/>
    <property type="project" value="UniProtKB-UniRule"/>
</dbReference>
<dbReference type="Gene3D" id="1.20.5.1150">
    <property type="entry name" value="Ribosomal protein S8"/>
    <property type="match status" value="1"/>
</dbReference>
<dbReference type="HAMAP" id="MF_00358">
    <property type="entry name" value="Ribosomal_bS21"/>
    <property type="match status" value="1"/>
</dbReference>
<dbReference type="InterPro" id="IPR001911">
    <property type="entry name" value="Ribosomal_bS21"/>
</dbReference>
<dbReference type="InterPro" id="IPR018278">
    <property type="entry name" value="Ribosomal_bS21_CS"/>
</dbReference>
<dbReference type="InterPro" id="IPR038380">
    <property type="entry name" value="Ribosomal_bS21_sf"/>
</dbReference>
<dbReference type="NCBIfam" id="TIGR00030">
    <property type="entry name" value="S21p"/>
    <property type="match status" value="1"/>
</dbReference>
<dbReference type="Pfam" id="PF01165">
    <property type="entry name" value="Ribosomal_S21"/>
    <property type="match status" value="1"/>
</dbReference>
<dbReference type="PRINTS" id="PR00976">
    <property type="entry name" value="RIBOSOMALS21"/>
</dbReference>
<dbReference type="PROSITE" id="PS01181">
    <property type="entry name" value="RIBOSOMAL_S21"/>
    <property type="match status" value="1"/>
</dbReference>
<comment type="similarity">
    <text evidence="1">Belongs to the bacterial ribosomal protein bS21 family.</text>
</comment>
<keyword id="KW-0687">Ribonucleoprotein</keyword>
<keyword id="KW-0689">Ribosomal protein</keyword>
<gene>
    <name evidence="1" type="primary">rpsU</name>
    <name type="ordered locus">CFF8240_0122</name>
</gene>
<name>RS21_CAMFF</name>
<feature type="chain" id="PRO_1000005103" description="Small ribosomal subunit protein bS21">
    <location>
        <begin position="1"/>
        <end position="70"/>
    </location>
</feature>
<organism>
    <name type="scientific">Campylobacter fetus subsp. fetus (strain 82-40)</name>
    <dbReference type="NCBI Taxonomy" id="360106"/>
    <lineage>
        <taxon>Bacteria</taxon>
        <taxon>Pseudomonadati</taxon>
        <taxon>Campylobacterota</taxon>
        <taxon>Epsilonproteobacteria</taxon>
        <taxon>Campylobacterales</taxon>
        <taxon>Campylobacteraceae</taxon>
        <taxon>Campylobacter</taxon>
    </lineage>
</organism>
<reference key="1">
    <citation type="submission" date="2006-11" db="EMBL/GenBank/DDBJ databases">
        <title>Sequence of Campylobacter fetus subsp. fetus 82-40.</title>
        <authorList>
            <person name="Fouts D.E."/>
            <person name="Nelson K.E."/>
        </authorList>
    </citation>
    <scope>NUCLEOTIDE SEQUENCE [LARGE SCALE GENOMIC DNA]</scope>
    <source>
        <strain>82-40</strain>
    </source>
</reference>
<accession>A0RM99</accession>
<protein>
    <recommendedName>
        <fullName evidence="1">Small ribosomal subunit protein bS21</fullName>
    </recommendedName>
    <alternativeName>
        <fullName evidence="2">30S ribosomal protein S21</fullName>
    </alternativeName>
</protein>